<accession>Q2J307</accession>
<reference key="1">
    <citation type="submission" date="2006-01" db="EMBL/GenBank/DDBJ databases">
        <title>Complete sequence of Rhodopseudomonas palustris HaA2.</title>
        <authorList>
            <consortium name="US DOE Joint Genome Institute"/>
            <person name="Copeland A."/>
            <person name="Lucas S."/>
            <person name="Lapidus A."/>
            <person name="Barry K."/>
            <person name="Detter J.C."/>
            <person name="Glavina T."/>
            <person name="Hammon N."/>
            <person name="Israni S."/>
            <person name="Pitluck S."/>
            <person name="Chain P."/>
            <person name="Malfatti S."/>
            <person name="Shin M."/>
            <person name="Vergez L."/>
            <person name="Schmutz J."/>
            <person name="Larimer F."/>
            <person name="Land M."/>
            <person name="Hauser L."/>
            <person name="Pelletier D.A."/>
            <person name="Kyrpides N."/>
            <person name="Anderson I."/>
            <person name="Oda Y."/>
            <person name="Harwood C.S."/>
            <person name="Richardson P."/>
        </authorList>
    </citation>
    <scope>NUCLEOTIDE SEQUENCE [LARGE SCALE GENOMIC DNA]</scope>
    <source>
        <strain>HaA2</strain>
    </source>
</reference>
<sequence length="420" mass="46959">MSNGVTAPLARHAMAYVLAGGRGSRLMELTDRRAKPAVYFGGKSRIIDFALSNALNSGIRRIAVATQYKAHSLIRHLQRGWNFFRPERNESFDILPASQRVSDDMWYRGTADAVYQNIDIIESYDPKFIVLLAGDHVYKMDYEKMLQQHVEQGADVTVGCLEVARSEATAFGVMHVDAKDVIQSFLEKPADPPAMPGKPDRALVSMGIYVFDTKFLIEELHRDAANPNSSHDFGKDIIPYIVQHGKAVAHHFDKSCRRSHAEDTSYWRDAGTVDAYWAANIDLTDIVPQLDLYDREWPIWTYGEITPPAKFVHDKDGRRGEAVSSLVSGGCIISGAALRHTLLFTGVRVHSYSQVEGAVILPYADIARSCRLKNVVVDAEVRIPDGLVVGEDPELDARRFRRTDSGICLITQPMIDRLDQ</sequence>
<evidence type="ECO:0000255" key="1">
    <source>
        <dbReference type="HAMAP-Rule" id="MF_00624"/>
    </source>
</evidence>
<evidence type="ECO:0000305" key="2"/>
<protein>
    <recommendedName>
        <fullName evidence="1">Glucose-1-phosphate adenylyltransferase</fullName>
        <ecNumber evidence="1">2.7.7.27</ecNumber>
    </recommendedName>
    <alternativeName>
        <fullName evidence="1">ADP-glucose pyrophosphorylase</fullName>
        <shortName evidence="1">ADPGlc PPase</shortName>
    </alternativeName>
    <alternativeName>
        <fullName evidence="1">ADP-glucose synthase</fullName>
    </alternativeName>
</protein>
<proteinExistence type="inferred from homology"/>
<keyword id="KW-0067">ATP-binding</keyword>
<keyword id="KW-0119">Carbohydrate metabolism</keyword>
<keyword id="KW-0320">Glycogen biosynthesis</keyword>
<keyword id="KW-0321">Glycogen metabolism</keyword>
<keyword id="KW-0547">Nucleotide-binding</keyword>
<keyword id="KW-0548">Nucleotidyltransferase</keyword>
<keyword id="KW-1185">Reference proteome</keyword>
<keyword id="KW-0808">Transferase</keyword>
<dbReference type="EC" id="2.7.7.27" evidence="1"/>
<dbReference type="EMBL" id="CP000250">
    <property type="protein sequence ID" value="ABD05153.1"/>
    <property type="status" value="ALT_INIT"/>
    <property type="molecule type" value="Genomic_DNA"/>
</dbReference>
<dbReference type="RefSeq" id="WP_011439343.1">
    <property type="nucleotide sequence ID" value="NC_007778.1"/>
</dbReference>
<dbReference type="SMR" id="Q2J307"/>
<dbReference type="STRING" id="316058.RPB_0442"/>
<dbReference type="KEGG" id="rpb:RPB_0442"/>
<dbReference type="eggNOG" id="COG0448">
    <property type="taxonomic scope" value="Bacteria"/>
</dbReference>
<dbReference type="HOGENOM" id="CLU_029499_14_1_5"/>
<dbReference type="OrthoDB" id="9801810at2"/>
<dbReference type="UniPathway" id="UPA00164"/>
<dbReference type="Proteomes" id="UP000008809">
    <property type="component" value="Chromosome"/>
</dbReference>
<dbReference type="GO" id="GO:0005524">
    <property type="term" value="F:ATP binding"/>
    <property type="evidence" value="ECO:0007669"/>
    <property type="project" value="UniProtKB-KW"/>
</dbReference>
<dbReference type="GO" id="GO:0008878">
    <property type="term" value="F:glucose-1-phosphate adenylyltransferase activity"/>
    <property type="evidence" value="ECO:0007669"/>
    <property type="project" value="UniProtKB-UniRule"/>
</dbReference>
<dbReference type="GO" id="GO:0005978">
    <property type="term" value="P:glycogen biosynthetic process"/>
    <property type="evidence" value="ECO:0007669"/>
    <property type="project" value="UniProtKB-UniRule"/>
</dbReference>
<dbReference type="CDD" id="cd02508">
    <property type="entry name" value="ADP_Glucose_PP"/>
    <property type="match status" value="1"/>
</dbReference>
<dbReference type="CDD" id="cd04651">
    <property type="entry name" value="LbH_G1P_AT_C"/>
    <property type="match status" value="1"/>
</dbReference>
<dbReference type="Gene3D" id="2.160.10.10">
    <property type="entry name" value="Hexapeptide repeat proteins"/>
    <property type="match status" value="1"/>
</dbReference>
<dbReference type="Gene3D" id="3.90.550.10">
    <property type="entry name" value="Spore Coat Polysaccharide Biosynthesis Protein SpsA, Chain A"/>
    <property type="match status" value="1"/>
</dbReference>
<dbReference type="HAMAP" id="MF_00624">
    <property type="entry name" value="GlgC"/>
    <property type="match status" value="1"/>
</dbReference>
<dbReference type="InterPro" id="IPR011831">
    <property type="entry name" value="ADP-Glc_PPase"/>
</dbReference>
<dbReference type="InterPro" id="IPR005836">
    <property type="entry name" value="ADP_Glu_pyroP_CS"/>
</dbReference>
<dbReference type="InterPro" id="IPR023049">
    <property type="entry name" value="GlgC_bac"/>
</dbReference>
<dbReference type="InterPro" id="IPR056818">
    <property type="entry name" value="GlmU/GlgC-like_hexapep"/>
</dbReference>
<dbReference type="InterPro" id="IPR005835">
    <property type="entry name" value="NTP_transferase_dom"/>
</dbReference>
<dbReference type="InterPro" id="IPR029044">
    <property type="entry name" value="Nucleotide-diphossugar_trans"/>
</dbReference>
<dbReference type="InterPro" id="IPR011004">
    <property type="entry name" value="Trimer_LpxA-like_sf"/>
</dbReference>
<dbReference type="NCBIfam" id="TIGR02091">
    <property type="entry name" value="glgC"/>
    <property type="match status" value="1"/>
</dbReference>
<dbReference type="NCBIfam" id="NF001947">
    <property type="entry name" value="PRK00725.1"/>
    <property type="match status" value="1"/>
</dbReference>
<dbReference type="NCBIfam" id="NF002023">
    <property type="entry name" value="PRK00844.1"/>
    <property type="match status" value="1"/>
</dbReference>
<dbReference type="PANTHER" id="PTHR43523:SF2">
    <property type="entry name" value="GLUCOSE-1-PHOSPHATE ADENYLYLTRANSFERASE"/>
    <property type="match status" value="1"/>
</dbReference>
<dbReference type="PANTHER" id="PTHR43523">
    <property type="entry name" value="GLUCOSE-1-PHOSPHATE ADENYLYLTRANSFERASE-RELATED"/>
    <property type="match status" value="1"/>
</dbReference>
<dbReference type="Pfam" id="PF24894">
    <property type="entry name" value="Hexapep_GlmU"/>
    <property type="match status" value="1"/>
</dbReference>
<dbReference type="Pfam" id="PF00483">
    <property type="entry name" value="NTP_transferase"/>
    <property type="match status" value="1"/>
</dbReference>
<dbReference type="SUPFAM" id="SSF53448">
    <property type="entry name" value="Nucleotide-diphospho-sugar transferases"/>
    <property type="match status" value="1"/>
</dbReference>
<dbReference type="SUPFAM" id="SSF51161">
    <property type="entry name" value="Trimeric LpxA-like enzymes"/>
    <property type="match status" value="1"/>
</dbReference>
<dbReference type="PROSITE" id="PS00808">
    <property type="entry name" value="ADP_GLC_PYROPHOSPH_1"/>
    <property type="match status" value="1"/>
</dbReference>
<dbReference type="PROSITE" id="PS00809">
    <property type="entry name" value="ADP_GLC_PYROPHOSPH_2"/>
    <property type="match status" value="1"/>
</dbReference>
<dbReference type="PROSITE" id="PS00810">
    <property type="entry name" value="ADP_GLC_PYROPHOSPH_3"/>
    <property type="match status" value="1"/>
</dbReference>
<comment type="function">
    <text evidence="1">Involved in the biosynthesis of ADP-glucose, a building block required for the elongation reactions to produce glycogen. Catalyzes the reaction between ATP and alpha-D-glucose 1-phosphate (G1P) to produce pyrophosphate and ADP-Glc.</text>
</comment>
<comment type="catalytic activity">
    <reaction evidence="1">
        <text>alpha-D-glucose 1-phosphate + ATP + H(+) = ADP-alpha-D-glucose + diphosphate</text>
        <dbReference type="Rhea" id="RHEA:12120"/>
        <dbReference type="ChEBI" id="CHEBI:15378"/>
        <dbReference type="ChEBI" id="CHEBI:30616"/>
        <dbReference type="ChEBI" id="CHEBI:33019"/>
        <dbReference type="ChEBI" id="CHEBI:57498"/>
        <dbReference type="ChEBI" id="CHEBI:58601"/>
        <dbReference type="EC" id="2.7.7.27"/>
    </reaction>
</comment>
<comment type="pathway">
    <text evidence="1">Glycan biosynthesis; glycogen biosynthesis.</text>
</comment>
<comment type="subunit">
    <text evidence="1">Homotetramer.</text>
</comment>
<comment type="similarity">
    <text evidence="1">Belongs to the bacterial/plant glucose-1-phosphate adenylyltransferase family.</text>
</comment>
<comment type="sequence caution" evidence="2">
    <conflict type="erroneous initiation">
        <sequence resource="EMBL-CDS" id="ABD05153"/>
    </conflict>
</comment>
<feature type="chain" id="PRO_0000261893" description="Glucose-1-phosphate adenylyltransferase">
    <location>
        <begin position="1"/>
        <end position="420"/>
    </location>
</feature>
<feature type="binding site" evidence="1">
    <location>
        <position position="107"/>
    </location>
    <ligand>
        <name>alpha-D-glucose 1-phosphate</name>
        <dbReference type="ChEBI" id="CHEBI:58601"/>
    </ligand>
</feature>
<feature type="binding site" evidence="1">
    <location>
        <position position="172"/>
    </location>
    <ligand>
        <name>alpha-D-glucose 1-phosphate</name>
        <dbReference type="ChEBI" id="CHEBI:58601"/>
    </ligand>
</feature>
<feature type="binding site" evidence="1">
    <location>
        <begin position="187"/>
        <end position="188"/>
    </location>
    <ligand>
        <name>alpha-D-glucose 1-phosphate</name>
        <dbReference type="ChEBI" id="CHEBI:58601"/>
    </ligand>
</feature>
<feature type="binding site" evidence="1">
    <location>
        <position position="205"/>
    </location>
    <ligand>
        <name>alpha-D-glucose 1-phosphate</name>
        <dbReference type="ChEBI" id="CHEBI:58601"/>
    </ligand>
</feature>
<organism>
    <name type="scientific">Rhodopseudomonas palustris (strain HaA2)</name>
    <dbReference type="NCBI Taxonomy" id="316058"/>
    <lineage>
        <taxon>Bacteria</taxon>
        <taxon>Pseudomonadati</taxon>
        <taxon>Pseudomonadota</taxon>
        <taxon>Alphaproteobacteria</taxon>
        <taxon>Hyphomicrobiales</taxon>
        <taxon>Nitrobacteraceae</taxon>
        <taxon>Rhodopseudomonas</taxon>
    </lineage>
</organism>
<gene>
    <name evidence="1" type="primary">glgC</name>
    <name type="ordered locus">RPB_0442</name>
</gene>
<name>GLGC_RHOP2</name>